<name>X92_TRYBB</name>
<accession>P12304</accession>
<reference key="1">
    <citation type="journal article" date="1989" name="Nucleic Acids Res.">
        <title>A silent open reading frame of Trypanosoma brucei coding for a protein which shares epitopes with the major structural protein of the paraflagellar rod.</title>
        <authorList>
            <person name="Schlaeppi K."/>
            <person name="Seebeck T."/>
        </authorList>
    </citation>
    <scope>NUCLEOTIDE SEQUENCE [GENOMIC DNA]</scope>
    <source>
        <strain>STIB 366</strain>
    </source>
</reference>
<protein>
    <recommendedName>
        <fullName>Protein X92</fullName>
    </recommendedName>
</protein>
<dbReference type="EMBL" id="X14820">
    <property type="protein sequence ID" value="CAA32932.1"/>
    <property type="molecule type" value="Genomic_DNA"/>
</dbReference>
<dbReference type="PIR" id="S05437">
    <property type="entry name" value="S05437"/>
</dbReference>
<comment type="miscellaneous">
    <text>X92 crossreacts with PFR-antiserum (PFR = major structural protein of paraflagellar rod).</text>
</comment>
<comment type="miscellaneous">
    <text>X92 most likely represents a silent open reading frame in the genome of T.brucei.</text>
</comment>
<proteinExistence type="predicted"/>
<sequence>MDILRRTTSVELTRLPVSAADTLSDVVFPWQSLCFRLAMVFNNEGGKYDKDGRALMVAVGESNFVLMWRKLFNALCIAPVVVDGSDTQHKLNAESGSLHTSTSSSWCTYDPTRTGTLGKIAGKLFVVTAKCVCEGATLETTAPTSGEVEESGQGKETPIPRRIECVYDFHYTLPDFDIWGNDVTIGFLVMSHYSGNGNVDFVRSLDPTAARVKNLFKSPTVVLGTCHYRAVASRLLRCTSVARQISSTSVMICVNVANVAHVPVRVQEVSFDIYSTQMGEGDNDIGGVQLTHEQRFGPCGTDLKAIKLLQRTVTVTPLLLHGRCLEETLQPGESACFQFAIEVQPHLCHLLETHPRQEPHSRYANNTASVAVEAKNAPYSMRNDVSPILPHSPVAPQTVWRPSPIGTVECVPCSELKQVLFSKFVSQAYVSYNPIVSAGGESTDQRVASPLVSLSGTRCPGPCSRRGWPRSGKRRRGNTCSQLKLSPATCLHILRVCVCVCVCVFAFDGSKGAGQFYCVIGSLFFFRSFSLFLCPLLTVCLLRAKIFNI</sequence>
<organism>
    <name type="scientific">Trypanosoma brucei brucei</name>
    <dbReference type="NCBI Taxonomy" id="5702"/>
    <lineage>
        <taxon>Eukaryota</taxon>
        <taxon>Discoba</taxon>
        <taxon>Euglenozoa</taxon>
        <taxon>Kinetoplastea</taxon>
        <taxon>Metakinetoplastina</taxon>
        <taxon>Trypanosomatida</taxon>
        <taxon>Trypanosomatidae</taxon>
        <taxon>Trypanosoma</taxon>
    </lineage>
</organism>
<feature type="chain" id="PRO_0000066000" description="Protein X92">
    <location>
        <begin position="1"/>
        <end position="549"/>
    </location>
</feature>